<comment type="similarity">
    <text evidence="1">Belongs to the UPF0270 family.</text>
</comment>
<name>Y4336_PSEF5</name>
<accession>Q4K8K5</accession>
<reference key="1">
    <citation type="journal article" date="2005" name="Nat. Biotechnol.">
        <title>Complete genome sequence of the plant commensal Pseudomonas fluorescens Pf-5.</title>
        <authorList>
            <person name="Paulsen I.T."/>
            <person name="Press C.M."/>
            <person name="Ravel J."/>
            <person name="Kobayashi D.Y."/>
            <person name="Myers G.S.A."/>
            <person name="Mavrodi D.V."/>
            <person name="DeBoy R.T."/>
            <person name="Seshadri R."/>
            <person name="Ren Q."/>
            <person name="Madupu R."/>
            <person name="Dodson R.J."/>
            <person name="Durkin A.S."/>
            <person name="Brinkac L.M."/>
            <person name="Daugherty S.C."/>
            <person name="Sullivan S.A."/>
            <person name="Rosovitz M.J."/>
            <person name="Gwinn M.L."/>
            <person name="Zhou L."/>
            <person name="Schneider D.J."/>
            <person name="Cartinhour S.W."/>
            <person name="Nelson W.C."/>
            <person name="Weidman J."/>
            <person name="Watkins K."/>
            <person name="Tran K."/>
            <person name="Khouri H."/>
            <person name="Pierson E.A."/>
            <person name="Pierson L.S. III"/>
            <person name="Thomashow L.S."/>
            <person name="Loper J.E."/>
        </authorList>
    </citation>
    <scope>NUCLEOTIDE SEQUENCE [LARGE SCALE GENOMIC DNA]</scope>
    <source>
        <strain>ATCC BAA-477 / NRRL B-23932 / Pf-5</strain>
    </source>
</reference>
<feature type="chain" id="PRO_1000045169" description="UPF0270 protein PFL_4336">
    <location>
        <begin position="1"/>
        <end position="75"/>
    </location>
</feature>
<gene>
    <name type="ordered locus">PFL_4336</name>
</gene>
<organism>
    <name type="scientific">Pseudomonas fluorescens (strain ATCC BAA-477 / NRRL B-23932 / Pf-5)</name>
    <dbReference type="NCBI Taxonomy" id="220664"/>
    <lineage>
        <taxon>Bacteria</taxon>
        <taxon>Pseudomonadati</taxon>
        <taxon>Pseudomonadota</taxon>
        <taxon>Gammaproteobacteria</taxon>
        <taxon>Pseudomonadales</taxon>
        <taxon>Pseudomonadaceae</taxon>
        <taxon>Pseudomonas</taxon>
    </lineage>
</organism>
<protein>
    <recommendedName>
        <fullName evidence="1">UPF0270 protein PFL_4336</fullName>
    </recommendedName>
</protein>
<sequence>MLIPHDQLEVDTLTRLIEDFVTREGTDNGDETPLETRVLRVRQALTKGQAVIVFDPDSEQCQLMLKHDVPKELFD</sequence>
<dbReference type="EMBL" id="CP000076">
    <property type="protein sequence ID" value="AAY93591.1"/>
    <property type="molecule type" value="Genomic_DNA"/>
</dbReference>
<dbReference type="RefSeq" id="WP_011062606.1">
    <property type="nucleotide sequence ID" value="NC_004129.6"/>
</dbReference>
<dbReference type="SMR" id="Q4K8K5"/>
<dbReference type="STRING" id="220664.PFL_4336"/>
<dbReference type="KEGG" id="pfl:PFL_4336"/>
<dbReference type="PATRIC" id="fig|220664.5.peg.4441"/>
<dbReference type="eggNOG" id="COG3089">
    <property type="taxonomic scope" value="Bacteria"/>
</dbReference>
<dbReference type="HOGENOM" id="CLU_186759_2_0_6"/>
<dbReference type="Proteomes" id="UP000008540">
    <property type="component" value="Chromosome"/>
</dbReference>
<dbReference type="Gene3D" id="1.10.10.610">
    <property type="entry name" value="YehU-like"/>
    <property type="match status" value="1"/>
</dbReference>
<dbReference type="HAMAP" id="MF_00690">
    <property type="entry name" value="UPF0270"/>
    <property type="match status" value="1"/>
</dbReference>
<dbReference type="InterPro" id="IPR010648">
    <property type="entry name" value="UPF0270"/>
</dbReference>
<dbReference type="InterPro" id="IPR036685">
    <property type="entry name" value="YehU-like_sf"/>
</dbReference>
<dbReference type="NCBIfam" id="NF001441">
    <property type="entry name" value="PRK00304.1"/>
    <property type="match status" value="1"/>
</dbReference>
<dbReference type="Pfam" id="PF06794">
    <property type="entry name" value="UPF0270"/>
    <property type="match status" value="1"/>
</dbReference>
<dbReference type="PIRSF" id="PIRSF006169">
    <property type="entry name" value="UCP006169"/>
    <property type="match status" value="1"/>
</dbReference>
<dbReference type="SUPFAM" id="SSF118001">
    <property type="entry name" value="YehU-like"/>
    <property type="match status" value="1"/>
</dbReference>
<evidence type="ECO:0000255" key="1">
    <source>
        <dbReference type="HAMAP-Rule" id="MF_00690"/>
    </source>
</evidence>
<proteinExistence type="inferred from homology"/>